<comment type="function">
    <text evidence="1">Catalyzes the hydrolysis of UDP-3-O-myristoyl-N-acetylglucosamine to form UDP-3-O-myristoylglucosamine and acetate, the committed step in lipid A biosynthesis.</text>
</comment>
<comment type="catalytic activity">
    <reaction evidence="1">
        <text>a UDP-3-O-[(3R)-3-hydroxyacyl]-N-acetyl-alpha-D-glucosamine + H2O = a UDP-3-O-[(3R)-3-hydroxyacyl]-alpha-D-glucosamine + acetate</text>
        <dbReference type="Rhea" id="RHEA:67816"/>
        <dbReference type="ChEBI" id="CHEBI:15377"/>
        <dbReference type="ChEBI" id="CHEBI:30089"/>
        <dbReference type="ChEBI" id="CHEBI:137740"/>
        <dbReference type="ChEBI" id="CHEBI:173225"/>
        <dbReference type="EC" id="3.5.1.108"/>
    </reaction>
</comment>
<comment type="cofactor">
    <cofactor evidence="1">
        <name>Zn(2+)</name>
        <dbReference type="ChEBI" id="CHEBI:29105"/>
    </cofactor>
</comment>
<comment type="pathway">
    <text evidence="1">Glycolipid biosynthesis; lipid IV(A) biosynthesis; lipid IV(A) from (3R)-3-hydroxytetradecanoyl-[acyl-carrier-protein] and UDP-N-acetyl-alpha-D-glucosamine: step 2/6.</text>
</comment>
<comment type="similarity">
    <text evidence="1">Belongs to the LpxC family.</text>
</comment>
<feature type="chain" id="PRO_0000253694" description="UDP-3-O-acyl-N-acetylglucosamine deacetylase">
    <location>
        <begin position="1"/>
        <end position="305"/>
    </location>
</feature>
<feature type="active site" description="Proton donor" evidence="1">
    <location>
        <position position="265"/>
    </location>
</feature>
<feature type="binding site" evidence="1">
    <location>
        <position position="79"/>
    </location>
    <ligand>
        <name>Zn(2+)</name>
        <dbReference type="ChEBI" id="CHEBI:29105"/>
    </ligand>
</feature>
<feature type="binding site" evidence="1">
    <location>
        <position position="238"/>
    </location>
    <ligand>
        <name>Zn(2+)</name>
        <dbReference type="ChEBI" id="CHEBI:29105"/>
    </ligand>
</feature>
<feature type="binding site" evidence="1">
    <location>
        <position position="242"/>
    </location>
    <ligand>
        <name>Zn(2+)</name>
        <dbReference type="ChEBI" id="CHEBI:29105"/>
    </ligand>
</feature>
<dbReference type="EC" id="3.5.1.108" evidence="1"/>
<dbReference type="EMBL" id="CP000036">
    <property type="protein sequence ID" value="ABB64818.1"/>
    <property type="molecule type" value="Genomic_DNA"/>
</dbReference>
<dbReference type="RefSeq" id="WP_000595480.1">
    <property type="nucleotide sequence ID" value="NC_007613.1"/>
</dbReference>
<dbReference type="SMR" id="Q326D9"/>
<dbReference type="KEGG" id="sbo:SBO_0083"/>
<dbReference type="HOGENOM" id="CLU_046528_1_0_6"/>
<dbReference type="UniPathway" id="UPA00359">
    <property type="reaction ID" value="UER00478"/>
</dbReference>
<dbReference type="Proteomes" id="UP000007067">
    <property type="component" value="Chromosome"/>
</dbReference>
<dbReference type="GO" id="GO:0016020">
    <property type="term" value="C:membrane"/>
    <property type="evidence" value="ECO:0007669"/>
    <property type="project" value="GOC"/>
</dbReference>
<dbReference type="GO" id="GO:0046872">
    <property type="term" value="F:metal ion binding"/>
    <property type="evidence" value="ECO:0007669"/>
    <property type="project" value="UniProtKB-KW"/>
</dbReference>
<dbReference type="GO" id="GO:0103117">
    <property type="term" value="F:UDP-3-O-acyl-N-acetylglucosamine deacetylase activity"/>
    <property type="evidence" value="ECO:0007669"/>
    <property type="project" value="UniProtKB-UniRule"/>
</dbReference>
<dbReference type="GO" id="GO:0009245">
    <property type="term" value="P:lipid A biosynthetic process"/>
    <property type="evidence" value="ECO:0007669"/>
    <property type="project" value="UniProtKB-UniRule"/>
</dbReference>
<dbReference type="FunFam" id="3.30.1700.10:FF:000001">
    <property type="entry name" value="UDP-3-O-acyl-N-acetylglucosamine deacetylase"/>
    <property type="match status" value="1"/>
</dbReference>
<dbReference type="FunFam" id="3.30.230.20:FF:000001">
    <property type="entry name" value="UDP-3-O-acyl-N-acetylglucosamine deacetylase"/>
    <property type="match status" value="1"/>
</dbReference>
<dbReference type="Gene3D" id="3.30.230.20">
    <property type="entry name" value="lpxc deacetylase, domain 1"/>
    <property type="match status" value="1"/>
</dbReference>
<dbReference type="Gene3D" id="3.30.1700.10">
    <property type="entry name" value="lpxc deacetylase, domain 2"/>
    <property type="match status" value="1"/>
</dbReference>
<dbReference type="HAMAP" id="MF_00388">
    <property type="entry name" value="LpxC"/>
    <property type="match status" value="1"/>
</dbReference>
<dbReference type="InterPro" id="IPR020568">
    <property type="entry name" value="Ribosomal_Su5_D2-typ_SF"/>
</dbReference>
<dbReference type="InterPro" id="IPR004463">
    <property type="entry name" value="UDP-acyl_GlcNac_deAcase"/>
</dbReference>
<dbReference type="InterPro" id="IPR011334">
    <property type="entry name" value="UDP-acyl_GlcNac_deAcase_C"/>
</dbReference>
<dbReference type="InterPro" id="IPR015870">
    <property type="entry name" value="UDP-acyl_N-AcGlcN_deAcase_N"/>
</dbReference>
<dbReference type="NCBIfam" id="TIGR00325">
    <property type="entry name" value="lpxC"/>
    <property type="match status" value="1"/>
</dbReference>
<dbReference type="PANTHER" id="PTHR33694">
    <property type="entry name" value="UDP-3-O-ACYL-N-ACETYLGLUCOSAMINE DEACETYLASE 1, MITOCHONDRIAL-RELATED"/>
    <property type="match status" value="1"/>
</dbReference>
<dbReference type="PANTHER" id="PTHR33694:SF1">
    <property type="entry name" value="UDP-3-O-ACYL-N-ACETYLGLUCOSAMINE DEACETYLASE 1, MITOCHONDRIAL-RELATED"/>
    <property type="match status" value="1"/>
</dbReference>
<dbReference type="Pfam" id="PF03331">
    <property type="entry name" value="LpxC"/>
    <property type="match status" value="1"/>
</dbReference>
<dbReference type="SUPFAM" id="SSF54211">
    <property type="entry name" value="Ribosomal protein S5 domain 2-like"/>
    <property type="match status" value="2"/>
</dbReference>
<name>LPXC_SHIBS</name>
<accession>Q326D9</accession>
<sequence length="305" mass="33998">MIKQRTLKRIVQATGVGLHTGKKVTLTLRPAPANTGVIYRRTDLNPPVDFPADAKSVRDTMLCTCLVNEHDVRISTVEHLNAALAGLGIDNIVIEVNAPEIPIMDGSAAPFVYLLLDAGIDELNCAKKFVRIKETVRVEDGDKWAEFKPYNGFSLDFTIDFNHPAIDSSNQRYAMNFSADAFMRQISRARTFGFMRDIEYLQSRGLCLGGSFDCAIVVDDYRVLNEDGLRFEDEFVRHKMLDAIGDLFMCGHNIIGAFIAYKSGHALNNKLLQAVLAKQEAWEYVTFQDDAELPLTFKAPSAVLA</sequence>
<evidence type="ECO:0000255" key="1">
    <source>
        <dbReference type="HAMAP-Rule" id="MF_00388"/>
    </source>
</evidence>
<organism>
    <name type="scientific">Shigella boydii serotype 4 (strain Sb227)</name>
    <dbReference type="NCBI Taxonomy" id="300268"/>
    <lineage>
        <taxon>Bacteria</taxon>
        <taxon>Pseudomonadati</taxon>
        <taxon>Pseudomonadota</taxon>
        <taxon>Gammaproteobacteria</taxon>
        <taxon>Enterobacterales</taxon>
        <taxon>Enterobacteriaceae</taxon>
        <taxon>Shigella</taxon>
    </lineage>
</organism>
<gene>
    <name evidence="1" type="primary">lpxC</name>
    <name type="ordered locus">SBO_0083</name>
</gene>
<reference key="1">
    <citation type="journal article" date="2005" name="Nucleic Acids Res.">
        <title>Genome dynamics and diversity of Shigella species, the etiologic agents of bacillary dysentery.</title>
        <authorList>
            <person name="Yang F."/>
            <person name="Yang J."/>
            <person name="Zhang X."/>
            <person name="Chen L."/>
            <person name="Jiang Y."/>
            <person name="Yan Y."/>
            <person name="Tang X."/>
            <person name="Wang J."/>
            <person name="Xiong Z."/>
            <person name="Dong J."/>
            <person name="Xue Y."/>
            <person name="Zhu Y."/>
            <person name="Xu X."/>
            <person name="Sun L."/>
            <person name="Chen S."/>
            <person name="Nie H."/>
            <person name="Peng J."/>
            <person name="Xu J."/>
            <person name="Wang Y."/>
            <person name="Yuan Z."/>
            <person name="Wen Y."/>
            <person name="Yao Z."/>
            <person name="Shen Y."/>
            <person name="Qiang B."/>
            <person name="Hou Y."/>
            <person name="Yu J."/>
            <person name="Jin Q."/>
        </authorList>
    </citation>
    <scope>NUCLEOTIDE SEQUENCE [LARGE SCALE GENOMIC DNA]</scope>
    <source>
        <strain>Sb227</strain>
    </source>
</reference>
<keyword id="KW-0378">Hydrolase</keyword>
<keyword id="KW-0441">Lipid A biosynthesis</keyword>
<keyword id="KW-0444">Lipid biosynthesis</keyword>
<keyword id="KW-0443">Lipid metabolism</keyword>
<keyword id="KW-0479">Metal-binding</keyword>
<keyword id="KW-0862">Zinc</keyword>
<protein>
    <recommendedName>
        <fullName evidence="1">UDP-3-O-acyl-N-acetylglucosamine deacetylase</fullName>
        <shortName evidence="1">UDP-3-O-acyl-GlcNAc deacetylase</shortName>
        <ecNumber evidence="1">3.5.1.108</ecNumber>
    </recommendedName>
    <alternativeName>
        <fullName evidence="1">UDP-3-O-[R-3-hydroxymyristoyl]-N-acetylglucosamine deacetylase</fullName>
    </alternativeName>
</protein>
<proteinExistence type="inferred from homology"/>